<keyword id="KW-0067">ATP-binding</keyword>
<keyword id="KW-0436">Ligase</keyword>
<keyword id="KW-0460">Magnesium</keyword>
<keyword id="KW-0479">Metal-binding</keyword>
<keyword id="KW-0547">Nucleotide-binding</keyword>
<keyword id="KW-0816">Tricarboxylic acid cycle</keyword>
<organism>
    <name type="scientific">Leptospira borgpetersenii serovar Hardjo-bovis (strain JB197)</name>
    <dbReference type="NCBI Taxonomy" id="355277"/>
    <lineage>
        <taxon>Bacteria</taxon>
        <taxon>Pseudomonadati</taxon>
        <taxon>Spirochaetota</taxon>
        <taxon>Spirochaetia</taxon>
        <taxon>Leptospirales</taxon>
        <taxon>Leptospiraceae</taxon>
        <taxon>Leptospira</taxon>
    </lineage>
</organism>
<name>SUCC_LEPBJ</name>
<sequence>MKIHEYQAKEILRRHKANVPFGIVIDKKENASKAHDEVTSKTGGSVVVVKAQIHAGGRGKGGGVKVTKTKEDATAAVDKILGMQLITPQTGPEGKKVLKVYLEQGIDIAKEYYLSILLDRSIRKTILMASTEGGMEIEEVAETHPEKILKIAVDPGIGLQVNQARQLAFELGLPAESHKSFQSLVMAIYDAYIKEDASLLEINPLILTKQNEIIAGDCKIDLDENALYRHADNAAFRDITEEDPLEVQASEFNLNYVKLDGNIGCMVNGAGLAMATMDIVKLAGAEPANFLDVGGGANKTTVTNGFKIILGDPNVKGIFVNIFGGIVRCDMVAEGIIEAAKAVDLKVPLVVRLQGTNSELGREVLNKSGLKITGVDDLREAASTIAKLIK</sequence>
<dbReference type="EC" id="6.2.1.5" evidence="1"/>
<dbReference type="EMBL" id="CP000350">
    <property type="protein sequence ID" value="ABJ76747.1"/>
    <property type="molecule type" value="Genomic_DNA"/>
</dbReference>
<dbReference type="RefSeq" id="WP_011669692.1">
    <property type="nucleotide sequence ID" value="NC_008510.1"/>
</dbReference>
<dbReference type="SMR" id="Q04QS3"/>
<dbReference type="KEGG" id="lbj:LBJ_2273"/>
<dbReference type="HOGENOM" id="CLU_037430_0_2_12"/>
<dbReference type="UniPathway" id="UPA00223">
    <property type="reaction ID" value="UER00999"/>
</dbReference>
<dbReference type="Proteomes" id="UP000000656">
    <property type="component" value="Chromosome 1"/>
</dbReference>
<dbReference type="GO" id="GO:0005829">
    <property type="term" value="C:cytosol"/>
    <property type="evidence" value="ECO:0007669"/>
    <property type="project" value="TreeGrafter"/>
</dbReference>
<dbReference type="GO" id="GO:0042709">
    <property type="term" value="C:succinate-CoA ligase complex"/>
    <property type="evidence" value="ECO:0007669"/>
    <property type="project" value="TreeGrafter"/>
</dbReference>
<dbReference type="GO" id="GO:0005524">
    <property type="term" value="F:ATP binding"/>
    <property type="evidence" value="ECO:0007669"/>
    <property type="project" value="UniProtKB-UniRule"/>
</dbReference>
<dbReference type="GO" id="GO:0000287">
    <property type="term" value="F:magnesium ion binding"/>
    <property type="evidence" value="ECO:0007669"/>
    <property type="project" value="UniProtKB-UniRule"/>
</dbReference>
<dbReference type="GO" id="GO:0004775">
    <property type="term" value="F:succinate-CoA ligase (ADP-forming) activity"/>
    <property type="evidence" value="ECO:0007669"/>
    <property type="project" value="UniProtKB-UniRule"/>
</dbReference>
<dbReference type="GO" id="GO:0004776">
    <property type="term" value="F:succinate-CoA ligase (GDP-forming) activity"/>
    <property type="evidence" value="ECO:0007669"/>
    <property type="project" value="RHEA"/>
</dbReference>
<dbReference type="GO" id="GO:0006104">
    <property type="term" value="P:succinyl-CoA metabolic process"/>
    <property type="evidence" value="ECO:0007669"/>
    <property type="project" value="TreeGrafter"/>
</dbReference>
<dbReference type="GO" id="GO:0006099">
    <property type="term" value="P:tricarboxylic acid cycle"/>
    <property type="evidence" value="ECO:0007669"/>
    <property type="project" value="UniProtKB-UniRule"/>
</dbReference>
<dbReference type="FunFam" id="3.30.1490.20:FF:000002">
    <property type="entry name" value="Succinate--CoA ligase [ADP-forming] subunit beta"/>
    <property type="match status" value="1"/>
</dbReference>
<dbReference type="FunFam" id="3.30.470.20:FF:000002">
    <property type="entry name" value="Succinate--CoA ligase [ADP-forming] subunit beta"/>
    <property type="match status" value="1"/>
</dbReference>
<dbReference type="FunFam" id="3.40.50.261:FF:000001">
    <property type="entry name" value="Succinate--CoA ligase [ADP-forming] subunit beta"/>
    <property type="match status" value="1"/>
</dbReference>
<dbReference type="Gene3D" id="3.30.1490.20">
    <property type="entry name" value="ATP-grasp fold, A domain"/>
    <property type="match status" value="1"/>
</dbReference>
<dbReference type="Gene3D" id="3.30.470.20">
    <property type="entry name" value="ATP-grasp fold, B domain"/>
    <property type="match status" value="1"/>
</dbReference>
<dbReference type="Gene3D" id="3.40.50.261">
    <property type="entry name" value="Succinyl-CoA synthetase domains"/>
    <property type="match status" value="1"/>
</dbReference>
<dbReference type="HAMAP" id="MF_00558">
    <property type="entry name" value="Succ_CoA_beta"/>
    <property type="match status" value="1"/>
</dbReference>
<dbReference type="InterPro" id="IPR011761">
    <property type="entry name" value="ATP-grasp"/>
</dbReference>
<dbReference type="InterPro" id="IPR013650">
    <property type="entry name" value="ATP-grasp_succ-CoA_synth-type"/>
</dbReference>
<dbReference type="InterPro" id="IPR013815">
    <property type="entry name" value="ATP_grasp_subdomain_1"/>
</dbReference>
<dbReference type="InterPro" id="IPR017866">
    <property type="entry name" value="Succ-CoA_synthase_bsu_CS"/>
</dbReference>
<dbReference type="InterPro" id="IPR005811">
    <property type="entry name" value="SUCC_ACL_C"/>
</dbReference>
<dbReference type="InterPro" id="IPR005809">
    <property type="entry name" value="Succ_CoA_ligase-like_bsu"/>
</dbReference>
<dbReference type="InterPro" id="IPR016102">
    <property type="entry name" value="Succinyl-CoA_synth-like"/>
</dbReference>
<dbReference type="NCBIfam" id="NF001913">
    <property type="entry name" value="PRK00696.1"/>
    <property type="match status" value="1"/>
</dbReference>
<dbReference type="NCBIfam" id="TIGR01016">
    <property type="entry name" value="sucCoAbeta"/>
    <property type="match status" value="1"/>
</dbReference>
<dbReference type="PANTHER" id="PTHR11815:SF10">
    <property type="entry name" value="SUCCINATE--COA LIGASE [GDP-FORMING] SUBUNIT BETA, MITOCHONDRIAL"/>
    <property type="match status" value="1"/>
</dbReference>
<dbReference type="PANTHER" id="PTHR11815">
    <property type="entry name" value="SUCCINYL-COA SYNTHETASE BETA CHAIN"/>
    <property type="match status" value="1"/>
</dbReference>
<dbReference type="Pfam" id="PF08442">
    <property type="entry name" value="ATP-grasp_2"/>
    <property type="match status" value="1"/>
</dbReference>
<dbReference type="Pfam" id="PF00549">
    <property type="entry name" value="Ligase_CoA"/>
    <property type="match status" value="1"/>
</dbReference>
<dbReference type="PIRSF" id="PIRSF001554">
    <property type="entry name" value="SucCS_beta"/>
    <property type="match status" value="1"/>
</dbReference>
<dbReference type="SUPFAM" id="SSF56059">
    <property type="entry name" value="Glutathione synthetase ATP-binding domain-like"/>
    <property type="match status" value="1"/>
</dbReference>
<dbReference type="SUPFAM" id="SSF52210">
    <property type="entry name" value="Succinyl-CoA synthetase domains"/>
    <property type="match status" value="1"/>
</dbReference>
<dbReference type="PROSITE" id="PS50975">
    <property type="entry name" value="ATP_GRASP"/>
    <property type="match status" value="1"/>
</dbReference>
<dbReference type="PROSITE" id="PS01217">
    <property type="entry name" value="SUCCINYL_COA_LIG_3"/>
    <property type="match status" value="1"/>
</dbReference>
<accession>Q04QS3</accession>
<gene>
    <name evidence="1" type="primary">sucC</name>
    <name type="ordered locus">LBJ_2273</name>
</gene>
<comment type="function">
    <text evidence="1">Succinyl-CoA synthetase functions in the citric acid cycle (TCA), coupling the hydrolysis of succinyl-CoA to the synthesis of either ATP or GTP and thus represents the only step of substrate-level phosphorylation in the TCA. The beta subunit provides nucleotide specificity of the enzyme and binds the substrate succinate, while the binding sites for coenzyme A and phosphate are found in the alpha subunit.</text>
</comment>
<comment type="catalytic activity">
    <reaction evidence="1">
        <text>succinate + ATP + CoA = succinyl-CoA + ADP + phosphate</text>
        <dbReference type="Rhea" id="RHEA:17661"/>
        <dbReference type="ChEBI" id="CHEBI:30031"/>
        <dbReference type="ChEBI" id="CHEBI:30616"/>
        <dbReference type="ChEBI" id="CHEBI:43474"/>
        <dbReference type="ChEBI" id="CHEBI:57287"/>
        <dbReference type="ChEBI" id="CHEBI:57292"/>
        <dbReference type="ChEBI" id="CHEBI:456216"/>
        <dbReference type="EC" id="6.2.1.5"/>
    </reaction>
    <physiologicalReaction direction="right-to-left" evidence="1">
        <dbReference type="Rhea" id="RHEA:17663"/>
    </physiologicalReaction>
</comment>
<comment type="catalytic activity">
    <reaction evidence="1">
        <text>GTP + succinate + CoA = succinyl-CoA + GDP + phosphate</text>
        <dbReference type="Rhea" id="RHEA:22120"/>
        <dbReference type="ChEBI" id="CHEBI:30031"/>
        <dbReference type="ChEBI" id="CHEBI:37565"/>
        <dbReference type="ChEBI" id="CHEBI:43474"/>
        <dbReference type="ChEBI" id="CHEBI:57287"/>
        <dbReference type="ChEBI" id="CHEBI:57292"/>
        <dbReference type="ChEBI" id="CHEBI:58189"/>
    </reaction>
    <physiologicalReaction direction="right-to-left" evidence="1">
        <dbReference type="Rhea" id="RHEA:22122"/>
    </physiologicalReaction>
</comment>
<comment type="cofactor">
    <cofactor evidence="1">
        <name>Mg(2+)</name>
        <dbReference type="ChEBI" id="CHEBI:18420"/>
    </cofactor>
    <text evidence="1">Binds 1 Mg(2+) ion per subunit.</text>
</comment>
<comment type="pathway">
    <text evidence="1">Carbohydrate metabolism; tricarboxylic acid cycle; succinate from succinyl-CoA (ligase route): step 1/1.</text>
</comment>
<comment type="subunit">
    <text evidence="1">Heterotetramer of two alpha and two beta subunits.</text>
</comment>
<comment type="similarity">
    <text evidence="1">Belongs to the succinate/malate CoA ligase beta subunit family.</text>
</comment>
<evidence type="ECO:0000255" key="1">
    <source>
        <dbReference type="HAMAP-Rule" id="MF_00558"/>
    </source>
</evidence>
<protein>
    <recommendedName>
        <fullName evidence="1">Succinate--CoA ligase [ADP-forming] subunit beta</fullName>
        <ecNumber evidence="1">6.2.1.5</ecNumber>
    </recommendedName>
    <alternativeName>
        <fullName evidence="1">Succinyl-CoA synthetase subunit beta</fullName>
        <shortName evidence="1">SCS-beta</shortName>
    </alternativeName>
</protein>
<feature type="chain" id="PRO_1000082116" description="Succinate--CoA ligase [ADP-forming] subunit beta">
    <location>
        <begin position="1"/>
        <end position="390"/>
    </location>
</feature>
<feature type="domain" description="ATP-grasp" evidence="1">
    <location>
        <begin position="9"/>
        <end position="248"/>
    </location>
</feature>
<feature type="binding site" evidence="1">
    <location>
        <position position="50"/>
    </location>
    <ligand>
        <name>ATP</name>
        <dbReference type="ChEBI" id="CHEBI:30616"/>
    </ligand>
</feature>
<feature type="binding site" evidence="1">
    <location>
        <begin position="57"/>
        <end position="59"/>
    </location>
    <ligand>
        <name>ATP</name>
        <dbReference type="ChEBI" id="CHEBI:30616"/>
    </ligand>
</feature>
<feature type="binding site" evidence="1">
    <location>
        <position position="103"/>
    </location>
    <ligand>
        <name>ATP</name>
        <dbReference type="ChEBI" id="CHEBI:30616"/>
    </ligand>
</feature>
<feature type="binding site" evidence="1">
    <location>
        <position position="106"/>
    </location>
    <ligand>
        <name>ATP</name>
        <dbReference type="ChEBI" id="CHEBI:30616"/>
    </ligand>
</feature>
<feature type="binding site" evidence="1">
    <location>
        <position position="111"/>
    </location>
    <ligand>
        <name>ATP</name>
        <dbReference type="ChEBI" id="CHEBI:30616"/>
    </ligand>
</feature>
<feature type="binding site" evidence="1">
    <location>
        <position position="203"/>
    </location>
    <ligand>
        <name>Mg(2+)</name>
        <dbReference type="ChEBI" id="CHEBI:18420"/>
    </ligand>
</feature>
<feature type="binding site" evidence="1">
    <location>
        <position position="217"/>
    </location>
    <ligand>
        <name>Mg(2+)</name>
        <dbReference type="ChEBI" id="CHEBI:18420"/>
    </ligand>
</feature>
<feature type="binding site" evidence="1">
    <location>
        <position position="268"/>
    </location>
    <ligand>
        <name>substrate</name>
        <note>ligand shared with subunit alpha</note>
    </ligand>
</feature>
<feature type="binding site" evidence="1">
    <location>
        <begin position="325"/>
        <end position="327"/>
    </location>
    <ligand>
        <name>substrate</name>
        <note>ligand shared with subunit alpha</note>
    </ligand>
</feature>
<reference key="1">
    <citation type="journal article" date="2006" name="Proc. Natl. Acad. Sci. U.S.A.">
        <title>Genome reduction in Leptospira borgpetersenii reflects limited transmission potential.</title>
        <authorList>
            <person name="Bulach D.M."/>
            <person name="Zuerner R.L."/>
            <person name="Wilson P."/>
            <person name="Seemann T."/>
            <person name="McGrath A."/>
            <person name="Cullen P.A."/>
            <person name="Davis J."/>
            <person name="Johnson M."/>
            <person name="Kuczek E."/>
            <person name="Alt D.P."/>
            <person name="Peterson-Burch B."/>
            <person name="Coppel R.L."/>
            <person name="Rood J.I."/>
            <person name="Davies J.K."/>
            <person name="Adler B."/>
        </authorList>
    </citation>
    <scope>NUCLEOTIDE SEQUENCE [LARGE SCALE GENOMIC DNA]</scope>
    <source>
        <strain>JB197</strain>
    </source>
</reference>
<proteinExistence type="inferred from homology"/>